<feature type="chain" id="PRO_0000049412" description="Putative homeobox protein R749">
    <location>
        <begin position="1"/>
        <end position="224"/>
    </location>
</feature>
<feature type="DNA-binding region" description="Homeobox" evidence="1">
    <location>
        <begin position="161"/>
        <end position="220"/>
    </location>
</feature>
<feature type="region of interest" description="Disordered" evidence="2">
    <location>
        <begin position="139"/>
        <end position="162"/>
    </location>
</feature>
<organism>
    <name type="scientific">Acanthamoeba polyphaga mimivirus</name>
    <name type="common">APMV</name>
    <dbReference type="NCBI Taxonomy" id="212035"/>
    <lineage>
        <taxon>Viruses</taxon>
        <taxon>Varidnaviria</taxon>
        <taxon>Bamfordvirae</taxon>
        <taxon>Nucleocytoviricota</taxon>
        <taxon>Megaviricetes</taxon>
        <taxon>Imitervirales</taxon>
        <taxon>Mimiviridae</taxon>
        <taxon>Megamimivirinae</taxon>
        <taxon>Mimivirus</taxon>
        <taxon>Mimivirus bradfordmassiliense</taxon>
    </lineage>
</organism>
<protein>
    <recommendedName>
        <fullName>Putative homeobox protein R749</fullName>
    </recommendedName>
</protein>
<accession>Q5UP03</accession>
<gene>
    <name type="ordered locus">MIMI_R749</name>
</gene>
<evidence type="ECO:0000255" key="1">
    <source>
        <dbReference type="PROSITE-ProRule" id="PRU00108"/>
    </source>
</evidence>
<evidence type="ECO:0000256" key="2">
    <source>
        <dbReference type="SAM" id="MobiDB-lite"/>
    </source>
</evidence>
<evidence type="ECO:0000305" key="3"/>
<sequence length="224" mass="25722">MDLQKACDRISQEFETDIIMGANLLVQMIQSQRITSNTPVQTVQPVQPVQPVQSVQSVQSVQSVQSVQPVQPVQPVQPVQPVRVPEINPVLFSYLIPLIPFIQMYHIAQKDVVPKNPQVQKQDVSQFTPDGKFKIPINKTKTIKKSTSEKKTSPKKKTTSQQIKRVRLSDEERNILESQYSKNNFPSPEIRDELAKKIGKTPRQVQIWFQNKRCKDRKNLEKNN</sequence>
<dbReference type="EMBL" id="AY653733">
    <property type="protein sequence ID" value="AAV51009.1"/>
    <property type="molecule type" value="Genomic_DNA"/>
</dbReference>
<dbReference type="SMR" id="Q5UP03"/>
<dbReference type="KEGG" id="vg:9925406"/>
<dbReference type="OrthoDB" id="41708at10239"/>
<dbReference type="Proteomes" id="UP000001134">
    <property type="component" value="Genome"/>
</dbReference>
<dbReference type="GO" id="GO:0042025">
    <property type="term" value="C:host cell nucleus"/>
    <property type="evidence" value="ECO:0007669"/>
    <property type="project" value="UniProtKB-SubCell"/>
</dbReference>
<dbReference type="GO" id="GO:0000978">
    <property type="term" value="F:RNA polymerase II cis-regulatory region sequence-specific DNA binding"/>
    <property type="evidence" value="ECO:0007669"/>
    <property type="project" value="TreeGrafter"/>
</dbReference>
<dbReference type="GO" id="GO:0006357">
    <property type="term" value="P:regulation of transcription by RNA polymerase II"/>
    <property type="evidence" value="ECO:0007669"/>
    <property type="project" value="TreeGrafter"/>
</dbReference>
<dbReference type="CDD" id="cd00086">
    <property type="entry name" value="homeodomain"/>
    <property type="match status" value="1"/>
</dbReference>
<dbReference type="Gene3D" id="1.10.10.60">
    <property type="entry name" value="Homeodomain-like"/>
    <property type="match status" value="1"/>
</dbReference>
<dbReference type="InterPro" id="IPR001356">
    <property type="entry name" value="HD"/>
</dbReference>
<dbReference type="InterPro" id="IPR051000">
    <property type="entry name" value="Homeobox_DNA-bind_prot"/>
</dbReference>
<dbReference type="InterPro" id="IPR009057">
    <property type="entry name" value="Homeodomain-like_sf"/>
</dbReference>
<dbReference type="InterPro" id="IPR000047">
    <property type="entry name" value="HTH_motif"/>
</dbReference>
<dbReference type="PANTHER" id="PTHR24324:SF9">
    <property type="entry name" value="HOMEOBOX DOMAIN-CONTAINING PROTEIN"/>
    <property type="match status" value="1"/>
</dbReference>
<dbReference type="PANTHER" id="PTHR24324">
    <property type="entry name" value="HOMEOBOX PROTEIN HHEX"/>
    <property type="match status" value="1"/>
</dbReference>
<dbReference type="Pfam" id="PF00046">
    <property type="entry name" value="Homeodomain"/>
    <property type="match status" value="1"/>
</dbReference>
<dbReference type="PRINTS" id="PR00031">
    <property type="entry name" value="HTHREPRESSR"/>
</dbReference>
<dbReference type="SMART" id="SM00389">
    <property type="entry name" value="HOX"/>
    <property type="match status" value="1"/>
</dbReference>
<dbReference type="SUPFAM" id="SSF46689">
    <property type="entry name" value="Homeodomain-like"/>
    <property type="match status" value="1"/>
</dbReference>
<dbReference type="PROSITE" id="PS50071">
    <property type="entry name" value="HOMEOBOX_2"/>
    <property type="match status" value="1"/>
</dbReference>
<proteinExistence type="predicted"/>
<name>Y749_MIMIV</name>
<comment type="subcellular location">
    <subcellularLocation>
        <location evidence="3">Host nucleus</location>
    </subcellularLocation>
</comment>
<organismHost>
    <name type="scientific">Acanthamoeba polyphaga</name>
    <name type="common">Amoeba</name>
    <dbReference type="NCBI Taxonomy" id="5757"/>
</organismHost>
<reference key="1">
    <citation type="journal article" date="2004" name="Science">
        <title>The 1.2-megabase genome sequence of Mimivirus.</title>
        <authorList>
            <person name="Raoult D."/>
            <person name="Audic S."/>
            <person name="Robert C."/>
            <person name="Abergel C."/>
            <person name="Renesto P."/>
            <person name="Ogata H."/>
            <person name="La Scola B."/>
            <person name="Susan M."/>
            <person name="Claverie J.-M."/>
        </authorList>
    </citation>
    <scope>NUCLEOTIDE SEQUENCE [LARGE SCALE GENOMIC DNA]</scope>
    <source>
        <strain>Rowbotham-Bradford</strain>
    </source>
</reference>
<keyword id="KW-0238">DNA-binding</keyword>
<keyword id="KW-0371">Homeobox</keyword>
<keyword id="KW-1048">Host nucleus</keyword>
<keyword id="KW-1185">Reference proteome</keyword>
<keyword id="KW-0804">Transcription</keyword>
<keyword id="KW-0805">Transcription regulation</keyword>